<feature type="signal peptide" evidence="1">
    <location>
        <begin position="1"/>
        <end position="26"/>
    </location>
</feature>
<feature type="chain" id="PRO_0000405946" description="Penicillin-binding protein activator LpoA">
    <location>
        <begin position="27"/>
        <end position="603"/>
    </location>
</feature>
<feature type="lipid moiety-binding region" description="N-palmitoyl cysteine" evidence="1">
    <location>
        <position position="27"/>
    </location>
</feature>
<feature type="lipid moiety-binding region" description="S-diacylglycerol cysteine" evidence="1">
    <location>
        <position position="27"/>
    </location>
</feature>
<evidence type="ECO:0000255" key="1">
    <source>
        <dbReference type="HAMAP-Rule" id="MF_01890"/>
    </source>
</evidence>
<evidence type="ECO:0000305" key="2"/>
<accession>Q9KUE0</accession>
<comment type="function">
    <text evidence="1">Regulator of peptidoglycan synthesis that is essential for the function of penicillin-binding protein 1A (PBP1a).</text>
</comment>
<comment type="subunit">
    <text evidence="1">Interacts with PBP1a.</text>
</comment>
<comment type="subcellular location">
    <subcellularLocation>
        <location evidence="1">Cell outer membrane</location>
        <topology evidence="1">Lipid-anchor</topology>
        <orientation evidence="1">Periplasmic side</orientation>
    </subcellularLocation>
</comment>
<comment type="similarity">
    <text evidence="1">Belongs to the LpoA family.</text>
</comment>
<comment type="sequence caution" evidence="2">
    <conflict type="erroneous initiation">
        <sequence resource="EMBL-CDS" id="AAF93749"/>
    </conflict>
    <text>Extended N-terminus.</text>
</comment>
<gene>
    <name evidence="1" type="primary">lpoA</name>
    <name type="ordered locus">VC_0581</name>
</gene>
<sequence length="603" mass="67670">MAMNHHQRRSVPRLLTPIALSIVLSACSTQPSSPDVVDITAQPLLTAQTYLMRADASQGNQQNDWLIMALKAAIEENNPDQAQLLIMRLAKQPLTPTQQAQWQLLRAQLLANTEQYQEALEQLSFQANWSLPQVQWQQYHQLRADIFTALDRSFDSTRELVALYGLSSNKDKEALADQIWANLNHYSASKIIKLSTEPDEAQLDGWLQLAIYMKTLGSDLPQLKNTLEKWLAENPQHPAAIYTPKAITDILALEIVKPTNTALLLPLTGKFAKQAQFIRDGFVFAMMNDADRQTNATLTIIDTNAETLESVDAILTSKQIDFVVGPLIKGNIEKLQQFQQSRGQMIPTLALNIPDQIDTTAGACYLALSPEQEVAQAAKHLFTQGYRYPLILAPQNAYGERVVEAFNEEWRRYSKNKVAVNLFGDKRQLQRNINSIFGLQDSQQNIAQMESLLGMGLESQPRSRRDIDAVYIVANSSELTLIKPFIEVAINPDTRPPKLFSNSNSNTGGRQYEDLSGVTYSDIPLLIQPAPSIKEQLTQIWPESSNAERRLQALGMDAYRLMVELPQMKIVEGYTIDGQTGVLSIDEQCVVQREISWAEHGVR</sequence>
<dbReference type="EMBL" id="AE003852">
    <property type="protein sequence ID" value="AAF93749.1"/>
    <property type="status" value="ALT_INIT"/>
    <property type="molecule type" value="Genomic_DNA"/>
</dbReference>
<dbReference type="PIR" id="B82306">
    <property type="entry name" value="B82306"/>
</dbReference>
<dbReference type="SMR" id="Q9KUE0"/>
<dbReference type="STRING" id="243277.VC_0581"/>
<dbReference type="DNASU" id="2615369"/>
<dbReference type="EnsemblBacteria" id="AAF93749">
    <property type="protein sequence ID" value="AAF93749"/>
    <property type="gene ID" value="VC_0581"/>
</dbReference>
<dbReference type="KEGG" id="vch:VC_0581"/>
<dbReference type="eggNOG" id="COG3107">
    <property type="taxonomic scope" value="Bacteria"/>
</dbReference>
<dbReference type="HOGENOM" id="CLU_026091_1_0_6"/>
<dbReference type="Proteomes" id="UP000000584">
    <property type="component" value="Chromosome 1"/>
</dbReference>
<dbReference type="GO" id="GO:0031241">
    <property type="term" value="C:periplasmic side of cell outer membrane"/>
    <property type="evidence" value="ECO:0000318"/>
    <property type="project" value="GO_Central"/>
</dbReference>
<dbReference type="GO" id="GO:0030234">
    <property type="term" value="F:enzyme regulator activity"/>
    <property type="evidence" value="ECO:0000318"/>
    <property type="project" value="GO_Central"/>
</dbReference>
<dbReference type="GO" id="GO:0009252">
    <property type="term" value="P:peptidoglycan biosynthetic process"/>
    <property type="evidence" value="ECO:0000318"/>
    <property type="project" value="GO_Central"/>
</dbReference>
<dbReference type="GO" id="GO:0008360">
    <property type="term" value="P:regulation of cell shape"/>
    <property type="evidence" value="ECO:0007669"/>
    <property type="project" value="UniProtKB-KW"/>
</dbReference>
<dbReference type="CDD" id="cd06339">
    <property type="entry name" value="PBP1_YraM_LppC_lipoprotein-like"/>
    <property type="match status" value="1"/>
</dbReference>
<dbReference type="Gene3D" id="1.25.40.650">
    <property type="match status" value="1"/>
</dbReference>
<dbReference type="Gene3D" id="3.40.50.2300">
    <property type="match status" value="2"/>
</dbReference>
<dbReference type="Gene3D" id="1.25.40.10">
    <property type="entry name" value="Tetratricopeptide repeat domain"/>
    <property type="match status" value="1"/>
</dbReference>
<dbReference type="HAMAP" id="MF_01890">
    <property type="entry name" value="LpoA"/>
    <property type="match status" value="1"/>
</dbReference>
<dbReference type="InterPro" id="IPR007443">
    <property type="entry name" value="LpoA"/>
</dbReference>
<dbReference type="InterPro" id="IPR028082">
    <property type="entry name" value="Peripla_BP_I"/>
</dbReference>
<dbReference type="InterPro" id="IPR011990">
    <property type="entry name" value="TPR-like_helical_dom_sf"/>
</dbReference>
<dbReference type="PANTHER" id="PTHR38038">
    <property type="entry name" value="PENICILLIN-BINDING PROTEIN ACTIVATOR LPOA"/>
    <property type="match status" value="1"/>
</dbReference>
<dbReference type="PANTHER" id="PTHR38038:SF1">
    <property type="entry name" value="PENICILLIN-BINDING PROTEIN ACTIVATOR LPOA"/>
    <property type="match status" value="1"/>
</dbReference>
<dbReference type="Pfam" id="PF04348">
    <property type="entry name" value="LppC"/>
    <property type="match status" value="1"/>
</dbReference>
<dbReference type="SUPFAM" id="SSF53822">
    <property type="entry name" value="Periplasmic binding protein-like I"/>
    <property type="match status" value="1"/>
</dbReference>
<protein>
    <recommendedName>
        <fullName evidence="1">Penicillin-binding protein activator LpoA</fullName>
        <shortName evidence="1">PBP activator LpoA</shortName>
    </recommendedName>
</protein>
<proteinExistence type="inferred from homology"/>
<keyword id="KW-0998">Cell outer membrane</keyword>
<keyword id="KW-0133">Cell shape</keyword>
<keyword id="KW-0449">Lipoprotein</keyword>
<keyword id="KW-0472">Membrane</keyword>
<keyword id="KW-0564">Palmitate</keyword>
<keyword id="KW-0573">Peptidoglycan synthesis</keyword>
<keyword id="KW-1185">Reference proteome</keyword>
<keyword id="KW-0732">Signal</keyword>
<organism>
    <name type="scientific">Vibrio cholerae serotype O1 (strain ATCC 39315 / El Tor Inaba N16961)</name>
    <dbReference type="NCBI Taxonomy" id="243277"/>
    <lineage>
        <taxon>Bacteria</taxon>
        <taxon>Pseudomonadati</taxon>
        <taxon>Pseudomonadota</taxon>
        <taxon>Gammaproteobacteria</taxon>
        <taxon>Vibrionales</taxon>
        <taxon>Vibrionaceae</taxon>
        <taxon>Vibrio</taxon>
    </lineage>
</organism>
<reference key="1">
    <citation type="journal article" date="2000" name="Nature">
        <title>DNA sequence of both chromosomes of the cholera pathogen Vibrio cholerae.</title>
        <authorList>
            <person name="Heidelberg J.F."/>
            <person name="Eisen J.A."/>
            <person name="Nelson W.C."/>
            <person name="Clayton R.A."/>
            <person name="Gwinn M.L."/>
            <person name="Dodson R.J."/>
            <person name="Haft D.H."/>
            <person name="Hickey E.K."/>
            <person name="Peterson J.D."/>
            <person name="Umayam L.A."/>
            <person name="Gill S.R."/>
            <person name="Nelson K.E."/>
            <person name="Read T.D."/>
            <person name="Tettelin H."/>
            <person name="Richardson D.L."/>
            <person name="Ermolaeva M.D."/>
            <person name="Vamathevan J.J."/>
            <person name="Bass S."/>
            <person name="Qin H."/>
            <person name="Dragoi I."/>
            <person name="Sellers P."/>
            <person name="McDonald L.A."/>
            <person name="Utterback T.R."/>
            <person name="Fleischmann R.D."/>
            <person name="Nierman W.C."/>
            <person name="White O."/>
            <person name="Salzberg S.L."/>
            <person name="Smith H.O."/>
            <person name="Colwell R.R."/>
            <person name="Mekalanos J.J."/>
            <person name="Venter J.C."/>
            <person name="Fraser C.M."/>
        </authorList>
    </citation>
    <scope>NUCLEOTIDE SEQUENCE [LARGE SCALE GENOMIC DNA]</scope>
    <source>
        <strain>ATCC 39315 / El Tor Inaba N16961</strain>
    </source>
</reference>
<name>LPOA_VIBCH</name>